<comment type="function">
    <text evidence="2">PPIases accelerate the folding of proteins. It catalyzes the cis-trans isomerization of proline imidic peptide bonds in oligopeptides (By similarity).</text>
</comment>
<comment type="catalytic activity">
    <reaction evidence="2">
        <text>[protein]-peptidylproline (omega=180) = [protein]-peptidylproline (omega=0)</text>
        <dbReference type="Rhea" id="RHEA:16237"/>
        <dbReference type="Rhea" id="RHEA-COMP:10747"/>
        <dbReference type="Rhea" id="RHEA-COMP:10748"/>
        <dbReference type="ChEBI" id="CHEBI:83833"/>
        <dbReference type="ChEBI" id="CHEBI:83834"/>
        <dbReference type="EC" id="5.2.1.8"/>
    </reaction>
</comment>
<comment type="cofactor">
    <cofactor evidence="1">
        <name>Mg(2+)</name>
        <dbReference type="ChEBI" id="CHEBI:18420"/>
    </cofactor>
</comment>
<comment type="mass spectrometry"/>
<comment type="similarity">
    <text evidence="3">In the N-terminal section; belongs to the HAD-like hydrolase superfamily. Cof family.</text>
</comment>
<comment type="similarity">
    <text evidence="3">In the C-terminal section; belongs to the cyclophilin-type PPIase family. PPIL1 subfamily.</text>
</comment>
<name>BPPI_STRP6</name>
<gene>
    <name type="ordered locus">M6_Spy1377</name>
</gene>
<dbReference type="EC" id="3.1.3.-"/>
<dbReference type="EC" id="5.2.1.8"/>
<dbReference type="EMBL" id="CP000003">
    <property type="protein sequence ID" value="AAT87512.1"/>
    <property type="molecule type" value="Genomic_DNA"/>
</dbReference>
<dbReference type="SMR" id="Q5XAQ1"/>
<dbReference type="KEGG" id="spa:M6_Spy1377"/>
<dbReference type="HOGENOM" id="CLU_046853_0_0_9"/>
<dbReference type="Proteomes" id="UP000001167">
    <property type="component" value="Chromosome"/>
</dbReference>
<dbReference type="GO" id="GO:0046872">
    <property type="term" value="F:metal ion binding"/>
    <property type="evidence" value="ECO:0007669"/>
    <property type="project" value="UniProtKB-KW"/>
</dbReference>
<dbReference type="GO" id="GO:0003755">
    <property type="term" value="F:peptidyl-prolyl cis-trans isomerase activity"/>
    <property type="evidence" value="ECO:0007669"/>
    <property type="project" value="UniProtKB-KW"/>
</dbReference>
<dbReference type="GO" id="GO:0016791">
    <property type="term" value="F:phosphatase activity"/>
    <property type="evidence" value="ECO:0007669"/>
    <property type="project" value="UniProtKB-ARBA"/>
</dbReference>
<dbReference type="CDD" id="cd07517">
    <property type="entry name" value="HAD_HPP"/>
    <property type="match status" value="1"/>
</dbReference>
<dbReference type="Gene3D" id="3.30.1240.10">
    <property type="match status" value="1"/>
</dbReference>
<dbReference type="Gene3D" id="2.40.100.10">
    <property type="entry name" value="Cyclophilin-like"/>
    <property type="match status" value="1"/>
</dbReference>
<dbReference type="Gene3D" id="3.40.50.1000">
    <property type="entry name" value="HAD superfamily/HAD-like"/>
    <property type="match status" value="1"/>
</dbReference>
<dbReference type="InterPro" id="IPR000150">
    <property type="entry name" value="Cof"/>
</dbReference>
<dbReference type="InterPro" id="IPR029000">
    <property type="entry name" value="Cyclophilin-like_dom_sf"/>
</dbReference>
<dbReference type="InterPro" id="IPR002130">
    <property type="entry name" value="Cyclophilin-type_PPIase_dom"/>
</dbReference>
<dbReference type="InterPro" id="IPR044666">
    <property type="entry name" value="Cyclophilin_A-like"/>
</dbReference>
<dbReference type="InterPro" id="IPR036412">
    <property type="entry name" value="HAD-like_sf"/>
</dbReference>
<dbReference type="InterPro" id="IPR006379">
    <property type="entry name" value="HAD-SF_hydro_IIB"/>
</dbReference>
<dbReference type="InterPro" id="IPR023214">
    <property type="entry name" value="HAD_sf"/>
</dbReference>
<dbReference type="NCBIfam" id="TIGR00099">
    <property type="entry name" value="Cof-subfamily"/>
    <property type="match status" value="1"/>
</dbReference>
<dbReference type="NCBIfam" id="TIGR01484">
    <property type="entry name" value="HAD-SF-IIB"/>
    <property type="match status" value="1"/>
</dbReference>
<dbReference type="PANTHER" id="PTHR45625">
    <property type="entry name" value="PEPTIDYL-PROLYL CIS-TRANS ISOMERASE-RELATED"/>
    <property type="match status" value="1"/>
</dbReference>
<dbReference type="PANTHER" id="PTHR45625:SF4">
    <property type="entry name" value="PEPTIDYLPROLYL ISOMERASE DOMAIN AND WD REPEAT-CONTAINING PROTEIN 1"/>
    <property type="match status" value="1"/>
</dbReference>
<dbReference type="Pfam" id="PF08282">
    <property type="entry name" value="Hydrolase_3"/>
    <property type="match status" value="1"/>
</dbReference>
<dbReference type="Pfam" id="PF00160">
    <property type="entry name" value="Pro_isomerase"/>
    <property type="match status" value="1"/>
</dbReference>
<dbReference type="PRINTS" id="PR00153">
    <property type="entry name" value="CSAPPISMRASE"/>
</dbReference>
<dbReference type="SFLD" id="SFLDG01140">
    <property type="entry name" value="C2.B:_Phosphomannomutase_and_P"/>
    <property type="match status" value="1"/>
</dbReference>
<dbReference type="SFLD" id="SFLDS00003">
    <property type="entry name" value="Haloacid_Dehalogenase"/>
    <property type="match status" value="1"/>
</dbReference>
<dbReference type="SUPFAM" id="SSF50891">
    <property type="entry name" value="Cyclophilin-like"/>
    <property type="match status" value="1"/>
</dbReference>
<dbReference type="SUPFAM" id="SSF56784">
    <property type="entry name" value="HAD-like"/>
    <property type="match status" value="1"/>
</dbReference>
<dbReference type="PROSITE" id="PS50072">
    <property type="entry name" value="CSA_PPIASE_2"/>
    <property type="match status" value="1"/>
</dbReference>
<protein>
    <recommendedName>
        <fullName>Putative bifunctional phosphatase/peptidyl-prolyl cis-trans isomerase</fullName>
    </recommendedName>
    <domain>
        <recommendedName>
            <fullName>Phosphatase</fullName>
            <ecNumber>3.1.3.-</ecNumber>
        </recommendedName>
    </domain>
    <domain>
        <recommendedName>
            <fullName>Peptidyl-prolyl cis-trans isomerase</fullName>
            <shortName>PPIase</shortName>
            <ecNumber>5.2.1.8</ecNumber>
        </recommendedName>
        <alternativeName>
            <fullName>Rotamase</fullName>
        </alternativeName>
    </domain>
</protein>
<sequence>MEESMDAKLKYKAKKIKMVFFDIDDTLRVKDTGYMPESIQRVFKALKAKGILVGIASGRARYGVPQEVQDLHADYCVKLNGAYVKDDAKTIIFQAPIPADVVVAYKKWADDMGIFYGMAGRHEAVLSARNDMISNAIDNVYAQLEVCPDYNEYHDVYQMWTFEDKGDGLQLPAELAEHLRLVRWHDNSSDVVLKGTSKALGVSKVVDHLGLKPENILVFGDELNDLELFDYAGISIAMGVSHPLLQEKADFITKKVEEDGILYALEELGLIDKELQFPQLDLENHTGPKVTIKTNHGDMTLVLFPDHAPKTVANFLGLAKEGYYDGIIFHRIIPEFMIQGGDPTGTGMGGQSIYGESFEDEFSDELYNLRGALSMANAGPNTNGSQFFIVQNSKIPYAKKELERGGWPTPIAAAYAENGGTPHLDRRHTVFGQLVDETSFQVLDLIAGVETGAQDKPKEDVIIETIEVFD</sequence>
<reference evidence="7" key="1">
    <citation type="journal article" date="2004" name="J. Infect. Dis.">
        <title>Progress toward characterization of the group A Streptococcus metagenome: complete genome sequence of a macrolide-resistant serotype M6 strain.</title>
        <authorList>
            <person name="Banks D.J."/>
            <person name="Porcella S.F."/>
            <person name="Barbian K.D."/>
            <person name="Beres S.B."/>
            <person name="Philips L.E."/>
            <person name="Voyich J.M."/>
            <person name="DeLeo F.R."/>
            <person name="Martin J.M."/>
            <person name="Somerville G.A."/>
            <person name="Musser J.M."/>
        </authorList>
    </citation>
    <scope>NUCLEOTIDE SEQUENCE [LARGE SCALE GENOMIC DNA]</scope>
    <source>
        <strain>ATCC BAA-946 / MGAS10394</strain>
    </source>
</reference>
<reference evidence="6" key="2">
    <citation type="submission" date="2000-05" db="UniProtKB">
        <title>Two-dimensional gel electrophoresis map of Streptococcus pyogenes proteins.</title>
        <authorList>
            <person name="Hogan D.A."/>
            <person name="Du P."/>
            <person name="Stevenson T.I."/>
            <person name="Whitton M."/>
            <person name="Kilby G.W."/>
            <person name="Rogers J."/>
            <person name="VanBogelen R.A."/>
        </authorList>
    </citation>
    <scope>PROTEIN SEQUENCE OF 294-331; 371-394 AND 428-458</scope>
    <scope>MASS SPECTROMETRY</scope>
    <source>
        <strain evidence="5">JRS4 / Serotype M6</strain>
    </source>
</reference>
<accession>Q5XAQ1</accession>
<keyword id="KW-0903">Direct protein sequencing</keyword>
<keyword id="KW-0378">Hydrolase</keyword>
<keyword id="KW-0413">Isomerase</keyword>
<keyword id="KW-0460">Magnesium</keyword>
<keyword id="KW-0479">Metal-binding</keyword>
<keyword id="KW-0697">Rotamase</keyword>
<organism>
    <name type="scientific">Streptococcus pyogenes serotype M6 (strain ATCC BAA-946 / MGAS10394)</name>
    <dbReference type="NCBI Taxonomy" id="286636"/>
    <lineage>
        <taxon>Bacteria</taxon>
        <taxon>Bacillati</taxon>
        <taxon>Bacillota</taxon>
        <taxon>Bacilli</taxon>
        <taxon>Lactobacillales</taxon>
        <taxon>Streptococcaceae</taxon>
        <taxon>Streptococcus</taxon>
    </lineage>
</organism>
<feature type="chain" id="PRO_0000308515" description="Putative bifunctional phosphatase/peptidyl-prolyl cis-trans isomerase">
    <location>
        <begin position="1"/>
        <end position="470"/>
    </location>
</feature>
<feature type="domain" description="PPIase cyclophilin-type" evidence="4">
    <location>
        <begin position="286"/>
        <end position="468"/>
    </location>
</feature>
<feature type="active site" description="Nucleophile" evidence="1">
    <location>
        <position position="22"/>
    </location>
</feature>
<feature type="binding site" evidence="1">
    <location>
        <position position="22"/>
    </location>
    <ligand>
        <name>Mg(2+)</name>
        <dbReference type="ChEBI" id="CHEBI:18420"/>
    </ligand>
</feature>
<feature type="binding site" evidence="1">
    <location>
        <position position="24"/>
    </location>
    <ligand>
        <name>Mg(2+)</name>
        <dbReference type="ChEBI" id="CHEBI:18420"/>
    </ligand>
</feature>
<feature type="binding site" evidence="1">
    <location>
        <position position="221"/>
    </location>
    <ligand>
        <name>Mg(2+)</name>
        <dbReference type="ChEBI" id="CHEBI:18420"/>
    </ligand>
</feature>
<evidence type="ECO:0000250" key="1">
    <source>
        <dbReference type="UniProtKB" id="P0A8Y5"/>
    </source>
</evidence>
<evidence type="ECO:0000250" key="2">
    <source>
        <dbReference type="UniProtKB" id="Q9H2H8"/>
    </source>
</evidence>
<evidence type="ECO:0000255" key="3"/>
<evidence type="ECO:0000255" key="4">
    <source>
        <dbReference type="PROSITE-ProRule" id="PRU00156"/>
    </source>
</evidence>
<evidence type="ECO:0000269" key="5">
    <source ref="2"/>
</evidence>
<evidence type="ECO:0000305" key="6"/>
<evidence type="ECO:0000312" key="7">
    <source>
        <dbReference type="EMBL" id="AAT87512.1"/>
    </source>
</evidence>
<proteinExistence type="evidence at protein level"/>